<keyword id="KW-0012">Acyltransferase</keyword>
<keyword id="KW-0997">Cell inner membrane</keyword>
<keyword id="KW-1003">Cell membrane</keyword>
<keyword id="KW-0444">Lipid biosynthesis</keyword>
<keyword id="KW-0443">Lipid metabolism</keyword>
<keyword id="KW-0472">Membrane</keyword>
<keyword id="KW-0594">Phospholipid biosynthesis</keyword>
<keyword id="KW-1208">Phospholipid metabolism</keyword>
<keyword id="KW-0808">Transferase</keyword>
<accession>Q1R3P5</accession>
<evidence type="ECO:0000255" key="1">
    <source>
        <dbReference type="HAMAP-Rule" id="MF_00393"/>
    </source>
</evidence>
<organism>
    <name type="scientific">Escherichia coli (strain UTI89 / UPEC)</name>
    <dbReference type="NCBI Taxonomy" id="364106"/>
    <lineage>
        <taxon>Bacteria</taxon>
        <taxon>Pseudomonadati</taxon>
        <taxon>Pseudomonadota</taxon>
        <taxon>Gammaproteobacteria</taxon>
        <taxon>Enterobacterales</taxon>
        <taxon>Enterobacteriaceae</taxon>
        <taxon>Escherichia</taxon>
    </lineage>
</organism>
<dbReference type="EC" id="2.3.1.15" evidence="1"/>
<dbReference type="EMBL" id="CP000243">
    <property type="protein sequence ID" value="ABE10019.1"/>
    <property type="molecule type" value="Genomic_DNA"/>
</dbReference>
<dbReference type="SMR" id="Q1R3P5"/>
<dbReference type="KEGG" id="eci:UTI89_C4611"/>
<dbReference type="HOGENOM" id="CLU_015407_0_0_6"/>
<dbReference type="UniPathway" id="UPA00557">
    <property type="reaction ID" value="UER00612"/>
</dbReference>
<dbReference type="Proteomes" id="UP000001952">
    <property type="component" value="Chromosome"/>
</dbReference>
<dbReference type="GO" id="GO:0005886">
    <property type="term" value="C:plasma membrane"/>
    <property type="evidence" value="ECO:0007669"/>
    <property type="project" value="UniProtKB-SubCell"/>
</dbReference>
<dbReference type="GO" id="GO:0004366">
    <property type="term" value="F:glycerol-3-phosphate O-acyltransferase activity"/>
    <property type="evidence" value="ECO:0007669"/>
    <property type="project" value="UniProtKB-UniRule"/>
</dbReference>
<dbReference type="GO" id="GO:0016024">
    <property type="term" value="P:CDP-diacylglycerol biosynthetic process"/>
    <property type="evidence" value="ECO:0007669"/>
    <property type="project" value="UniProtKB-UniRule"/>
</dbReference>
<dbReference type="GO" id="GO:0006631">
    <property type="term" value="P:fatty acid metabolic process"/>
    <property type="evidence" value="ECO:0007669"/>
    <property type="project" value="TreeGrafter"/>
</dbReference>
<dbReference type="CDD" id="cd07993">
    <property type="entry name" value="LPLAT_DHAPAT-like"/>
    <property type="match status" value="1"/>
</dbReference>
<dbReference type="HAMAP" id="MF_00393">
    <property type="entry name" value="Glyc3P_acyltrans"/>
    <property type="match status" value="1"/>
</dbReference>
<dbReference type="InterPro" id="IPR022284">
    <property type="entry name" value="GPAT/DHAPAT"/>
</dbReference>
<dbReference type="InterPro" id="IPR045520">
    <property type="entry name" value="GPAT/DHAPAT_C"/>
</dbReference>
<dbReference type="InterPro" id="IPR041728">
    <property type="entry name" value="GPAT/DHAPAT_LPLAT"/>
</dbReference>
<dbReference type="InterPro" id="IPR028354">
    <property type="entry name" value="GPAT_PlsB"/>
</dbReference>
<dbReference type="InterPro" id="IPR002123">
    <property type="entry name" value="Plipid/glycerol_acylTrfase"/>
</dbReference>
<dbReference type="NCBIfam" id="TIGR03703">
    <property type="entry name" value="plsB"/>
    <property type="match status" value="1"/>
</dbReference>
<dbReference type="NCBIfam" id="NF003441">
    <property type="entry name" value="PRK04974.1"/>
    <property type="match status" value="1"/>
</dbReference>
<dbReference type="PANTHER" id="PTHR12563:SF17">
    <property type="entry name" value="DIHYDROXYACETONE PHOSPHATE ACYLTRANSFERASE"/>
    <property type="match status" value="1"/>
</dbReference>
<dbReference type="PANTHER" id="PTHR12563">
    <property type="entry name" value="GLYCEROL-3-PHOSPHATE ACYLTRANSFERASE"/>
    <property type="match status" value="1"/>
</dbReference>
<dbReference type="Pfam" id="PF01553">
    <property type="entry name" value="Acyltransferase"/>
    <property type="match status" value="1"/>
</dbReference>
<dbReference type="Pfam" id="PF19277">
    <property type="entry name" value="GPAT_C"/>
    <property type="match status" value="1"/>
</dbReference>
<dbReference type="PIRSF" id="PIRSF500064">
    <property type="entry name" value="GPAT"/>
    <property type="match status" value="1"/>
</dbReference>
<dbReference type="PIRSF" id="PIRSF000437">
    <property type="entry name" value="GPAT_DHAPAT"/>
    <property type="match status" value="1"/>
</dbReference>
<dbReference type="SMART" id="SM00563">
    <property type="entry name" value="PlsC"/>
    <property type="match status" value="1"/>
</dbReference>
<dbReference type="SUPFAM" id="SSF69593">
    <property type="entry name" value="Glycerol-3-phosphate (1)-acyltransferase"/>
    <property type="match status" value="1"/>
</dbReference>
<name>PLSB_ECOUT</name>
<proteinExistence type="inferred from homology"/>
<gene>
    <name evidence="1" type="primary">plsB</name>
    <name type="ordered locus">UTI89_C4611</name>
</gene>
<comment type="catalytic activity">
    <reaction evidence="1">
        <text>sn-glycerol 3-phosphate + an acyl-CoA = a 1-acyl-sn-glycero-3-phosphate + CoA</text>
        <dbReference type="Rhea" id="RHEA:15325"/>
        <dbReference type="ChEBI" id="CHEBI:57287"/>
        <dbReference type="ChEBI" id="CHEBI:57597"/>
        <dbReference type="ChEBI" id="CHEBI:57970"/>
        <dbReference type="ChEBI" id="CHEBI:58342"/>
        <dbReference type="EC" id="2.3.1.15"/>
    </reaction>
</comment>
<comment type="pathway">
    <text evidence="1">Phospholipid metabolism; CDP-diacylglycerol biosynthesis; CDP-diacylglycerol from sn-glycerol 3-phosphate: step 1/3.</text>
</comment>
<comment type="subcellular location">
    <subcellularLocation>
        <location evidence="1">Cell inner membrane</location>
        <topology evidence="1">Peripheral membrane protein</topology>
        <orientation evidence="1">Cytoplasmic side</orientation>
    </subcellularLocation>
</comment>
<comment type="domain">
    <text evidence="1">The HXXXXD motif is essential for acyltransferase activity and may constitute the binding site for the phosphate moiety of the glycerol-3-phosphate.</text>
</comment>
<comment type="similarity">
    <text evidence="1">Belongs to the GPAT/DAPAT family.</text>
</comment>
<sequence length="827" mass="93696">MTFCYPCRAFALLTRGFTSFMSGWPRIYYKLLNLPLSILVKSKSIPADPAPELGLDTSRPIMYVLPYNSKADLLTLRAQCLAHDLPDPLEPLEIDGTLLPRYVFIHGGPRVFTYYTPKEESIKLFHDYLDLHRSNPNLDVQMVPVSVMFGRAPGREKGEVNPPLRMLNGVQKFFAVLWLGRDSFVRFSPSVSLRRMADEHGTDKTIAQKLARVARMHFARQRLAAVGPRLPARQDLFNKLLASRAIAKAVEDEARSKKISHEKAQQNAIALMEEIAANFSYEMIRLTDRILGFTWNRLYQGINVHNAERVRQLAHDGHELVYVPCHRSHMDYLLLSYVLYHQGLVPPHIAAGINLNFWPAGPIFRRLGAFFIRRTFKGNKLYSTVFREYLGELFSRGYSVEYFVEGGRSRTGRLLDPKTGTLSMTIQAMLRGGTRPITLIPIYIGYEHVMEVGTYAKELRGATKEKESLPQMLRGLSKLRNLGQGYVNFGEPMPLMTYLNQHVPDWRESIDPIEAVRPAWLTPTVNNIAADLMVRINNAGAANAMNLCCTALLASRQRSLTREQLTEQLNCYLDLMRNVPYSTDSTVPSASASELIDHALQMNKFEVEKDTIGDIIILPREQAVLMTYYRNNIAHMLVLPSLMAAIVTQHRHISRDVLMEHVNVLYPMLKAELFLRWDRDELPDVIDALANEMQRQGLITLQDDELHINPAHSRTLQLLAAGARETLQRYAITFWLLSANPSINRGTLEKESRTVAQRLSVLHGINAPEFFDKAVFSSLVLTLRDEGYISDSGDAEPAETMKVYQLLAELITSDVRLTIESATQGEG</sequence>
<reference key="1">
    <citation type="journal article" date="2006" name="Proc. Natl. Acad. Sci. U.S.A.">
        <title>Identification of genes subject to positive selection in uropathogenic strains of Escherichia coli: a comparative genomics approach.</title>
        <authorList>
            <person name="Chen S.L."/>
            <person name="Hung C.-S."/>
            <person name="Xu J."/>
            <person name="Reigstad C.S."/>
            <person name="Magrini V."/>
            <person name="Sabo A."/>
            <person name="Blasiar D."/>
            <person name="Bieri T."/>
            <person name="Meyer R.R."/>
            <person name="Ozersky P."/>
            <person name="Armstrong J.R."/>
            <person name="Fulton R.S."/>
            <person name="Latreille J.P."/>
            <person name="Spieth J."/>
            <person name="Hooton T.M."/>
            <person name="Mardis E.R."/>
            <person name="Hultgren S.J."/>
            <person name="Gordon J.I."/>
        </authorList>
    </citation>
    <scope>NUCLEOTIDE SEQUENCE [LARGE SCALE GENOMIC DNA]</scope>
    <source>
        <strain>UTI89 / UPEC</strain>
    </source>
</reference>
<protein>
    <recommendedName>
        <fullName evidence="1">Glycerol-3-phosphate acyltransferase</fullName>
        <shortName evidence="1">GPAT</shortName>
        <ecNumber evidence="1">2.3.1.15</ecNumber>
    </recommendedName>
</protein>
<feature type="chain" id="PRO_1000049431" description="Glycerol-3-phosphate acyltransferase">
    <location>
        <begin position="1"/>
        <end position="827"/>
    </location>
</feature>
<feature type="short sequence motif" description="HXXXXD motif">
    <location>
        <begin position="325"/>
        <end position="330"/>
    </location>
</feature>